<reference key="1">
    <citation type="journal article" date="2000" name="Protist">
        <title>Complete gene map of the plastid genome of the nonphotosynthetic euglenoid flagellate Astasia longa.</title>
        <authorList>
            <person name="Gockel G."/>
            <person name="Hachtel W."/>
        </authorList>
    </citation>
    <scope>NUCLEOTIDE SEQUENCE [LARGE SCALE GENOMIC DNA]</scope>
    <source>
        <strain>CCAP 1204-17a</strain>
    </source>
</reference>
<geneLocation type="non-photosynthetic plastid"/>
<name>YCY4_EUGLO</name>
<organism>
    <name type="scientific">Euglena longa</name>
    <name type="common">Euglenophycean alga</name>
    <name type="synonym">Astasia longa</name>
    <dbReference type="NCBI Taxonomy" id="3037"/>
    <lineage>
        <taxon>Eukaryota</taxon>
        <taxon>Discoba</taxon>
        <taxon>Euglenozoa</taxon>
        <taxon>Euglenida</taxon>
        <taxon>Spirocuta</taxon>
        <taxon>Euglenophyceae</taxon>
        <taxon>Euglenales</taxon>
        <taxon>Euglenaceae</taxon>
        <taxon>Euglena</taxon>
    </lineage>
</organism>
<comment type="subcellular location">
    <subcellularLocation>
        <location>Plastid</location>
    </subcellularLocation>
</comment>
<comment type="similarity">
    <text evidence="1">Belongs to the A.longa ORF167/ORF288 family.</text>
</comment>
<dbReference type="EMBL" id="AJ294725">
    <property type="protein sequence ID" value="CAC24606.1"/>
    <property type="molecule type" value="Genomic_DNA"/>
</dbReference>
<dbReference type="RefSeq" id="NP_074995.1">
    <property type="nucleotide sequence ID" value="NC_002652.1"/>
</dbReference>
<dbReference type="GeneID" id="1457318"/>
<dbReference type="GO" id="GO:0009536">
    <property type="term" value="C:plastid"/>
    <property type="evidence" value="ECO:0007669"/>
    <property type="project" value="UniProtKB-SubCell"/>
</dbReference>
<dbReference type="InterPro" id="IPR006851">
    <property type="entry name" value="DUF613"/>
</dbReference>
<dbReference type="Pfam" id="PF04764">
    <property type="entry name" value="DUF613"/>
    <property type="match status" value="2"/>
</dbReference>
<protein>
    <recommendedName>
        <fullName>Uncharacterized 30.8 kDa protein in rpl12-rps7 intergenic region</fullName>
    </recommendedName>
    <alternativeName>
        <fullName>ORF253</fullName>
    </alternativeName>
</protein>
<keyword id="KW-0934">Plastid</keyword>
<feature type="chain" id="PRO_0000217420" description="Uncharacterized 30.8 kDa protein in rpl12-rps7 intergenic region">
    <location>
        <begin position="1"/>
        <end position="253"/>
    </location>
</feature>
<sequence>MYIYRKPYEQNYWNNFILLSLYVNNKRVGVNKNITKLEYILLDIFLHGPLHTEFINYLEITNYINNRTYLYEKMLKEKSVNAINIILPPVMHTASFEYNYEIIEDLDSNKILNIYILNNKCYYCRKLKDDSYWEKFPFNEIPIFVNDKKVGLRLKTDKLKTTKNLTKVEYYLLDIFWFGPLKIEASEHYEKIMRQIKDRNKKYMCLYYEKIINGINIIFNISNNIEYKKFLNNDYSIKEMINVEHILTIYVLT</sequence>
<evidence type="ECO:0000305" key="1"/>
<proteinExistence type="inferred from homology"/>
<accession>P58149</accession>